<keyword id="KW-0049">Antioxidant</keyword>
<keyword id="KW-1015">Disulfide bond</keyword>
<keyword id="KW-0560">Oxidoreductase</keyword>
<keyword id="KW-0575">Peroxidase</keyword>
<keyword id="KW-0676">Redox-active center</keyword>
<keyword id="KW-1185">Reference proteome</keyword>
<evidence type="ECO:0000250" key="1"/>
<evidence type="ECO:0000255" key="2">
    <source>
        <dbReference type="HAMAP-Rule" id="MF_01676"/>
    </source>
</evidence>
<proteinExistence type="inferred from homology"/>
<protein>
    <recommendedName>
        <fullName evidence="2">Alkyl hydroperoxide reductase AhpD</fullName>
        <ecNumber evidence="2">1.11.1.28</ecNumber>
    </recommendedName>
    <alternativeName>
        <fullName evidence="2">Alkylhydroperoxidase AhpD</fullName>
    </alternativeName>
</protein>
<feature type="chain" id="PRO_0000359490" description="Alkyl hydroperoxide reductase AhpD">
    <location>
        <begin position="1"/>
        <end position="181"/>
    </location>
</feature>
<feature type="active site" description="Proton donor" evidence="2">
    <location>
        <position position="130"/>
    </location>
</feature>
<feature type="active site" description="Cysteine sulfenic acid (-SOH) intermediate" evidence="2">
    <location>
        <position position="133"/>
    </location>
</feature>
<feature type="disulfide bond" evidence="1">
    <location>
        <begin position="130"/>
        <end position="133"/>
    </location>
</feature>
<feature type="disulfide bond" description="Interchain (with AhpC); in linked form" evidence="2">
    <location>
        <position position="133"/>
    </location>
</feature>
<dbReference type="EC" id="1.11.1.28" evidence="2"/>
<dbReference type="EMBL" id="AM889285">
    <property type="protein sequence ID" value="CAP54518.1"/>
    <property type="molecule type" value="Genomic_DNA"/>
</dbReference>
<dbReference type="EMBL" id="CP001189">
    <property type="protein sequence ID" value="ACI51204.1"/>
    <property type="molecule type" value="Genomic_DNA"/>
</dbReference>
<dbReference type="RefSeq" id="WP_012223091.1">
    <property type="nucleotide sequence ID" value="NC_010125.1"/>
</dbReference>
<dbReference type="SMR" id="A9H8D2"/>
<dbReference type="STRING" id="272568.GDI0575"/>
<dbReference type="KEGG" id="gdi:GDI0575"/>
<dbReference type="KEGG" id="gdj:Gdia_1424"/>
<dbReference type="eggNOG" id="COG2128">
    <property type="taxonomic scope" value="Bacteria"/>
</dbReference>
<dbReference type="HOGENOM" id="CLU_105328_0_0_5"/>
<dbReference type="OrthoDB" id="9801997at2"/>
<dbReference type="Proteomes" id="UP000001176">
    <property type="component" value="Chromosome"/>
</dbReference>
<dbReference type="GO" id="GO:0008785">
    <property type="term" value="F:alkyl hydroperoxide reductase activity"/>
    <property type="evidence" value="ECO:0007669"/>
    <property type="project" value="UniProtKB-UniRule"/>
</dbReference>
<dbReference type="GO" id="GO:0015036">
    <property type="term" value="F:disulfide oxidoreductase activity"/>
    <property type="evidence" value="ECO:0007669"/>
    <property type="project" value="TreeGrafter"/>
</dbReference>
<dbReference type="GO" id="GO:0032843">
    <property type="term" value="F:hydroperoxide reductase activity"/>
    <property type="evidence" value="ECO:0007669"/>
    <property type="project" value="InterPro"/>
</dbReference>
<dbReference type="GO" id="GO:0051920">
    <property type="term" value="F:peroxiredoxin activity"/>
    <property type="evidence" value="ECO:0007669"/>
    <property type="project" value="InterPro"/>
</dbReference>
<dbReference type="GO" id="GO:0045454">
    <property type="term" value="P:cell redox homeostasis"/>
    <property type="evidence" value="ECO:0007669"/>
    <property type="project" value="TreeGrafter"/>
</dbReference>
<dbReference type="GO" id="GO:0006979">
    <property type="term" value="P:response to oxidative stress"/>
    <property type="evidence" value="ECO:0007669"/>
    <property type="project" value="InterPro"/>
</dbReference>
<dbReference type="Gene3D" id="1.20.1290.10">
    <property type="entry name" value="AhpD-like"/>
    <property type="match status" value="1"/>
</dbReference>
<dbReference type="HAMAP" id="MF_01676">
    <property type="entry name" value="AhpD"/>
    <property type="match status" value="1"/>
</dbReference>
<dbReference type="InterPro" id="IPR004674">
    <property type="entry name" value="AhpD"/>
</dbReference>
<dbReference type="InterPro" id="IPR029032">
    <property type="entry name" value="AhpD-like"/>
</dbReference>
<dbReference type="InterPro" id="IPR004675">
    <property type="entry name" value="AhpD_core"/>
</dbReference>
<dbReference type="InterPro" id="IPR003779">
    <property type="entry name" value="CMD-like"/>
</dbReference>
<dbReference type="NCBIfam" id="TIGR00777">
    <property type="entry name" value="ahpD"/>
    <property type="match status" value="1"/>
</dbReference>
<dbReference type="NCBIfam" id="TIGR00778">
    <property type="entry name" value="ahpD_dom"/>
    <property type="match status" value="1"/>
</dbReference>
<dbReference type="PANTHER" id="PTHR33930">
    <property type="entry name" value="ALKYL HYDROPEROXIDE REDUCTASE AHPD"/>
    <property type="match status" value="1"/>
</dbReference>
<dbReference type="PANTHER" id="PTHR33930:SF7">
    <property type="entry name" value="ALKYL HYDROPEROXIDE REDUCTASE AHPD"/>
    <property type="match status" value="1"/>
</dbReference>
<dbReference type="Pfam" id="PF02627">
    <property type="entry name" value="CMD"/>
    <property type="match status" value="1"/>
</dbReference>
<dbReference type="SUPFAM" id="SSF69118">
    <property type="entry name" value="AhpD-like"/>
    <property type="match status" value="1"/>
</dbReference>
<organism>
    <name type="scientific">Gluconacetobacter diazotrophicus (strain ATCC 49037 / DSM 5601 / CCUG 37298 / CIP 103539 / LMG 7603 / PAl5)</name>
    <dbReference type="NCBI Taxonomy" id="272568"/>
    <lineage>
        <taxon>Bacteria</taxon>
        <taxon>Pseudomonadati</taxon>
        <taxon>Pseudomonadota</taxon>
        <taxon>Alphaproteobacteria</taxon>
        <taxon>Acetobacterales</taxon>
        <taxon>Acetobacteraceae</taxon>
        <taxon>Gluconacetobacter</taxon>
    </lineage>
</organism>
<accession>A9H8D2</accession>
<sequence>MSIETLKERLPDYAKDLKLNLSSLANDITLSPQQLAGTFVASAIASRNADVTRAIVAEYESVLSPQALTAAKAAAAIMGLNNIYYRFVHMVEGDYAHMPARLRMNVIGRPGVEKLDFELWSLAVSAINGCGMCVESHEKVVREGGLSAEQVQTAVRVAATVHAVAATLDGAAALGDHPAAG</sequence>
<gene>
    <name evidence="2" type="primary">ahpD</name>
    <name type="ordered locus">GDI0575</name>
    <name type="ordered locus">Gdia_1424</name>
</gene>
<comment type="function">
    <text evidence="2">Antioxidant protein with alkyl hydroperoxidase activity. Required for the reduction of the AhpC active site cysteine residues and for the regeneration of the AhpC enzyme activity.</text>
</comment>
<comment type="catalytic activity">
    <reaction evidence="2">
        <text>N(6)-[(R)-dihydrolipoyl]-L-lysyl-[lipoyl-carrier protein] + a hydroperoxide = N(6)-[(R)-lipoyl]-L-lysyl-[lipoyl-carrier protein] + an alcohol + H2O</text>
        <dbReference type="Rhea" id="RHEA:62636"/>
        <dbReference type="Rhea" id="RHEA-COMP:10502"/>
        <dbReference type="Rhea" id="RHEA-COMP:16355"/>
        <dbReference type="ChEBI" id="CHEBI:15377"/>
        <dbReference type="ChEBI" id="CHEBI:30879"/>
        <dbReference type="ChEBI" id="CHEBI:35924"/>
        <dbReference type="ChEBI" id="CHEBI:83099"/>
        <dbReference type="ChEBI" id="CHEBI:83100"/>
        <dbReference type="EC" id="1.11.1.28"/>
    </reaction>
</comment>
<comment type="similarity">
    <text evidence="2">Belongs to the AhpD family.</text>
</comment>
<reference key="1">
    <citation type="journal article" date="2009" name="BMC Genomics">
        <title>Complete genome sequence of the sugarcane nitrogen-fixing endophyte Gluconacetobacter diazotrophicus Pal5.</title>
        <authorList>
            <person name="Bertalan M."/>
            <person name="Albano R."/>
            <person name="de Padua V."/>
            <person name="Rouws L."/>
            <person name="Rojas C."/>
            <person name="Hemerly A."/>
            <person name="Teixeira K."/>
            <person name="Schwab S."/>
            <person name="Araujo J."/>
            <person name="Oliveira A."/>
            <person name="Franca L."/>
            <person name="Magalhaes V."/>
            <person name="Alqueres S."/>
            <person name="Cardoso A."/>
            <person name="Almeida W."/>
            <person name="Loureiro M.M."/>
            <person name="Nogueira E."/>
            <person name="Cidade D."/>
            <person name="Oliveira D."/>
            <person name="Simao T."/>
            <person name="Macedo J."/>
            <person name="Valadao A."/>
            <person name="Dreschsel M."/>
            <person name="Freitas F."/>
            <person name="Vidal M."/>
            <person name="Guedes H."/>
            <person name="Rodrigues E."/>
            <person name="Meneses C."/>
            <person name="Brioso P."/>
            <person name="Pozzer L."/>
            <person name="Figueiredo D."/>
            <person name="Montano H."/>
            <person name="Junior J."/>
            <person name="de Souza Filho G."/>
            <person name="Martin Quintana Flores V."/>
            <person name="Ferreira B."/>
            <person name="Branco A."/>
            <person name="Gonzalez P."/>
            <person name="Guillobel H."/>
            <person name="Lemos M."/>
            <person name="Seibel L."/>
            <person name="Macedo J."/>
            <person name="Alves-Ferreira M."/>
            <person name="Sachetto-Martins G."/>
            <person name="Coelho A."/>
            <person name="Santos E."/>
            <person name="Amaral G."/>
            <person name="Neves A."/>
            <person name="Pacheco A.B."/>
            <person name="Carvalho D."/>
            <person name="Lery L."/>
            <person name="Bisch P."/>
            <person name="Rossle S.C."/>
            <person name="Urmenyi T."/>
            <person name="Rael Pereira A."/>
            <person name="Silva R."/>
            <person name="Rondinelli E."/>
            <person name="von Kruger W."/>
            <person name="Martins O."/>
            <person name="Baldani J.I."/>
            <person name="Ferreira P.C."/>
        </authorList>
    </citation>
    <scope>NUCLEOTIDE SEQUENCE [LARGE SCALE GENOMIC DNA]</scope>
    <source>
        <strain>ATCC 49037 / DSM 5601 / CCUG 37298 / CIP 103539 / LMG 7603 / PAl5</strain>
    </source>
</reference>
<reference key="2">
    <citation type="journal article" date="2010" name="Stand. Genomic Sci.">
        <title>Two genome sequences of the same bacterial strain, Gluconacetobacter diazotrophicus PAl 5, suggest a new standard in genome sequence submission.</title>
        <authorList>
            <person name="Giongo A."/>
            <person name="Tyler H.L."/>
            <person name="Zipperer U.N."/>
            <person name="Triplett E.W."/>
        </authorList>
    </citation>
    <scope>NUCLEOTIDE SEQUENCE [LARGE SCALE GENOMIC DNA]</scope>
    <source>
        <strain>ATCC 49037 / DSM 5601 / CCUG 37298 / CIP 103539 / LMG 7603 / PAl5</strain>
    </source>
</reference>
<name>AHPD_GLUDA</name>